<dbReference type="EC" id="2.7.4.3" evidence="1"/>
<dbReference type="EMBL" id="AM406671">
    <property type="protein sequence ID" value="CAL98923.1"/>
    <property type="molecule type" value="Genomic_DNA"/>
</dbReference>
<dbReference type="RefSeq" id="WP_011677149.1">
    <property type="nucleotide sequence ID" value="NC_009004.1"/>
</dbReference>
<dbReference type="SMR" id="A2RNN2"/>
<dbReference type="STRING" id="416870.llmg_2359"/>
<dbReference type="GeneID" id="61110405"/>
<dbReference type="KEGG" id="llm:llmg_2359"/>
<dbReference type="eggNOG" id="COG0563">
    <property type="taxonomic scope" value="Bacteria"/>
</dbReference>
<dbReference type="HOGENOM" id="CLU_032354_1_2_9"/>
<dbReference type="OrthoDB" id="9805030at2"/>
<dbReference type="PhylomeDB" id="A2RNN2"/>
<dbReference type="UniPathway" id="UPA00588">
    <property type="reaction ID" value="UER00649"/>
</dbReference>
<dbReference type="Proteomes" id="UP000000364">
    <property type="component" value="Chromosome"/>
</dbReference>
<dbReference type="GO" id="GO:0005737">
    <property type="term" value="C:cytoplasm"/>
    <property type="evidence" value="ECO:0007669"/>
    <property type="project" value="UniProtKB-SubCell"/>
</dbReference>
<dbReference type="GO" id="GO:0004017">
    <property type="term" value="F:adenylate kinase activity"/>
    <property type="evidence" value="ECO:0007669"/>
    <property type="project" value="UniProtKB-UniRule"/>
</dbReference>
<dbReference type="GO" id="GO:0005524">
    <property type="term" value="F:ATP binding"/>
    <property type="evidence" value="ECO:0007669"/>
    <property type="project" value="UniProtKB-UniRule"/>
</dbReference>
<dbReference type="GO" id="GO:0008270">
    <property type="term" value="F:zinc ion binding"/>
    <property type="evidence" value="ECO:0007669"/>
    <property type="project" value="UniProtKB-UniRule"/>
</dbReference>
<dbReference type="GO" id="GO:0044209">
    <property type="term" value="P:AMP salvage"/>
    <property type="evidence" value="ECO:0007669"/>
    <property type="project" value="UniProtKB-UniRule"/>
</dbReference>
<dbReference type="CDD" id="cd01428">
    <property type="entry name" value="ADK"/>
    <property type="match status" value="1"/>
</dbReference>
<dbReference type="FunFam" id="3.40.50.300:FF:000106">
    <property type="entry name" value="Adenylate kinase mitochondrial"/>
    <property type="match status" value="1"/>
</dbReference>
<dbReference type="Gene3D" id="3.40.50.300">
    <property type="entry name" value="P-loop containing nucleotide triphosphate hydrolases"/>
    <property type="match status" value="1"/>
</dbReference>
<dbReference type="HAMAP" id="MF_00235">
    <property type="entry name" value="Adenylate_kinase_Adk"/>
    <property type="match status" value="1"/>
</dbReference>
<dbReference type="InterPro" id="IPR006259">
    <property type="entry name" value="Adenyl_kin_sub"/>
</dbReference>
<dbReference type="InterPro" id="IPR000850">
    <property type="entry name" value="Adenylat/UMP-CMP_kin"/>
</dbReference>
<dbReference type="InterPro" id="IPR033690">
    <property type="entry name" value="Adenylat_kinase_CS"/>
</dbReference>
<dbReference type="InterPro" id="IPR007862">
    <property type="entry name" value="Adenylate_kinase_lid-dom"/>
</dbReference>
<dbReference type="InterPro" id="IPR027417">
    <property type="entry name" value="P-loop_NTPase"/>
</dbReference>
<dbReference type="NCBIfam" id="TIGR01351">
    <property type="entry name" value="adk"/>
    <property type="match status" value="1"/>
</dbReference>
<dbReference type="NCBIfam" id="NF001380">
    <property type="entry name" value="PRK00279.1-2"/>
    <property type="match status" value="1"/>
</dbReference>
<dbReference type="NCBIfam" id="NF001381">
    <property type="entry name" value="PRK00279.1-3"/>
    <property type="match status" value="1"/>
</dbReference>
<dbReference type="NCBIfam" id="NF001382">
    <property type="entry name" value="PRK00279.1-4"/>
    <property type="match status" value="1"/>
</dbReference>
<dbReference type="PANTHER" id="PTHR23359">
    <property type="entry name" value="NUCLEOTIDE KINASE"/>
    <property type="match status" value="1"/>
</dbReference>
<dbReference type="Pfam" id="PF00406">
    <property type="entry name" value="ADK"/>
    <property type="match status" value="1"/>
</dbReference>
<dbReference type="Pfam" id="PF05191">
    <property type="entry name" value="ADK_lid"/>
    <property type="match status" value="1"/>
</dbReference>
<dbReference type="PRINTS" id="PR00094">
    <property type="entry name" value="ADENYLTKNASE"/>
</dbReference>
<dbReference type="SUPFAM" id="SSF52540">
    <property type="entry name" value="P-loop containing nucleoside triphosphate hydrolases"/>
    <property type="match status" value="1"/>
</dbReference>
<dbReference type="PROSITE" id="PS00113">
    <property type="entry name" value="ADENYLATE_KINASE"/>
    <property type="match status" value="1"/>
</dbReference>
<keyword id="KW-0067">ATP-binding</keyword>
<keyword id="KW-0963">Cytoplasm</keyword>
<keyword id="KW-0418">Kinase</keyword>
<keyword id="KW-0479">Metal-binding</keyword>
<keyword id="KW-0545">Nucleotide biosynthesis</keyword>
<keyword id="KW-0547">Nucleotide-binding</keyword>
<keyword id="KW-0808">Transferase</keyword>
<keyword id="KW-0862">Zinc</keyword>
<evidence type="ECO:0000255" key="1">
    <source>
        <dbReference type="HAMAP-Rule" id="MF_00235"/>
    </source>
</evidence>
<name>KAD_LACLM</name>
<protein>
    <recommendedName>
        <fullName evidence="1">Adenylate kinase</fullName>
        <shortName evidence="1">AK</shortName>
        <ecNumber evidence="1">2.7.4.3</ecNumber>
    </recommendedName>
    <alternativeName>
        <fullName evidence="1">ATP-AMP transphosphorylase</fullName>
    </alternativeName>
    <alternativeName>
        <fullName evidence="1">ATP:AMP phosphotransferase</fullName>
    </alternativeName>
    <alternativeName>
        <fullName evidence="1">Adenylate monophosphate kinase</fullName>
    </alternativeName>
</protein>
<proteinExistence type="inferred from homology"/>
<organism>
    <name type="scientific">Lactococcus lactis subsp. cremoris (strain MG1363)</name>
    <dbReference type="NCBI Taxonomy" id="416870"/>
    <lineage>
        <taxon>Bacteria</taxon>
        <taxon>Bacillati</taxon>
        <taxon>Bacillota</taxon>
        <taxon>Bacilli</taxon>
        <taxon>Lactobacillales</taxon>
        <taxon>Streptococcaceae</taxon>
        <taxon>Lactococcus</taxon>
        <taxon>Lactococcus cremoris subsp. cremoris</taxon>
    </lineage>
</organism>
<sequence>MNLLIMGLPGAGKGTQAEFIVKNYGVNHISTGDMFRAAMKNETEMGKLAKSFIDKGELVPDEVTNGIVKERLAQDDIKASGFLLDGYPRTIDQAHALDTMLEELGIKLDAVVNIVVNPNILVDRLSGRYICRNCGATYHKIFNPTKVEGTCDVCGSHDLYQRADDVPETVKNRLDVNIKESAPIIEHYTELGLVKNIEGEQEISQVTDDIKKVLG</sequence>
<comment type="function">
    <text evidence="1">Catalyzes the reversible transfer of the terminal phosphate group between ATP and AMP. Plays an important role in cellular energy homeostasis and in adenine nucleotide metabolism.</text>
</comment>
<comment type="catalytic activity">
    <reaction evidence="1">
        <text>AMP + ATP = 2 ADP</text>
        <dbReference type="Rhea" id="RHEA:12973"/>
        <dbReference type="ChEBI" id="CHEBI:30616"/>
        <dbReference type="ChEBI" id="CHEBI:456215"/>
        <dbReference type="ChEBI" id="CHEBI:456216"/>
        <dbReference type="EC" id="2.7.4.3"/>
    </reaction>
</comment>
<comment type="pathway">
    <text evidence="1">Purine metabolism; AMP biosynthesis via salvage pathway; AMP from ADP: step 1/1.</text>
</comment>
<comment type="subunit">
    <text evidence="1">Monomer.</text>
</comment>
<comment type="subcellular location">
    <subcellularLocation>
        <location evidence="1">Cytoplasm</location>
    </subcellularLocation>
</comment>
<comment type="domain">
    <text evidence="1">Consists of three domains, a large central CORE domain and two small peripheral domains, NMPbind and LID, which undergo movements during catalysis. The LID domain closes over the site of phosphoryl transfer upon ATP binding. Assembling and dissambling the active center during each catalytic cycle provides an effective means to prevent ATP hydrolysis. Some bacteria have evolved a zinc-coordinating structure that stabilizes the LID domain.</text>
</comment>
<comment type="similarity">
    <text evidence="1">Belongs to the adenylate kinase family.</text>
</comment>
<gene>
    <name evidence="1" type="primary">adk</name>
    <name type="ordered locus">llmg_2359</name>
</gene>
<accession>A2RNN2</accession>
<feature type="chain" id="PRO_1000021735" description="Adenylate kinase">
    <location>
        <begin position="1"/>
        <end position="215"/>
    </location>
</feature>
<feature type="region of interest" description="NMP" evidence="1">
    <location>
        <begin position="30"/>
        <end position="59"/>
    </location>
</feature>
<feature type="region of interest" description="LID" evidence="1">
    <location>
        <begin position="127"/>
        <end position="165"/>
    </location>
</feature>
<feature type="binding site" evidence="1">
    <location>
        <begin position="10"/>
        <end position="15"/>
    </location>
    <ligand>
        <name>ATP</name>
        <dbReference type="ChEBI" id="CHEBI:30616"/>
    </ligand>
</feature>
<feature type="binding site" evidence="1">
    <location>
        <position position="31"/>
    </location>
    <ligand>
        <name>AMP</name>
        <dbReference type="ChEBI" id="CHEBI:456215"/>
    </ligand>
</feature>
<feature type="binding site" evidence="1">
    <location>
        <position position="36"/>
    </location>
    <ligand>
        <name>AMP</name>
        <dbReference type="ChEBI" id="CHEBI:456215"/>
    </ligand>
</feature>
<feature type="binding site" evidence="1">
    <location>
        <begin position="57"/>
        <end position="59"/>
    </location>
    <ligand>
        <name>AMP</name>
        <dbReference type="ChEBI" id="CHEBI:456215"/>
    </ligand>
</feature>
<feature type="binding site" evidence="1">
    <location>
        <begin position="86"/>
        <end position="89"/>
    </location>
    <ligand>
        <name>AMP</name>
        <dbReference type="ChEBI" id="CHEBI:456215"/>
    </ligand>
</feature>
<feature type="binding site" evidence="1">
    <location>
        <position position="93"/>
    </location>
    <ligand>
        <name>AMP</name>
        <dbReference type="ChEBI" id="CHEBI:456215"/>
    </ligand>
</feature>
<feature type="binding site" evidence="1">
    <location>
        <position position="128"/>
    </location>
    <ligand>
        <name>ATP</name>
        <dbReference type="ChEBI" id="CHEBI:30616"/>
    </ligand>
</feature>
<feature type="binding site" evidence="1">
    <location>
        <position position="131"/>
    </location>
    <ligand>
        <name>Zn(2+)</name>
        <dbReference type="ChEBI" id="CHEBI:29105"/>
        <note>structural</note>
    </ligand>
</feature>
<feature type="binding site" evidence="1">
    <location>
        <position position="134"/>
    </location>
    <ligand>
        <name>Zn(2+)</name>
        <dbReference type="ChEBI" id="CHEBI:29105"/>
        <note>structural</note>
    </ligand>
</feature>
<feature type="binding site" evidence="1">
    <location>
        <begin position="137"/>
        <end position="138"/>
    </location>
    <ligand>
        <name>ATP</name>
        <dbReference type="ChEBI" id="CHEBI:30616"/>
    </ligand>
</feature>
<feature type="binding site" evidence="1">
    <location>
        <position position="151"/>
    </location>
    <ligand>
        <name>Zn(2+)</name>
        <dbReference type="ChEBI" id="CHEBI:29105"/>
        <note>structural</note>
    </ligand>
</feature>
<feature type="binding site" evidence="1">
    <location>
        <position position="154"/>
    </location>
    <ligand>
        <name>Zn(2+)</name>
        <dbReference type="ChEBI" id="CHEBI:29105"/>
        <note>structural</note>
    </ligand>
</feature>
<feature type="binding site" evidence="1">
    <location>
        <position position="162"/>
    </location>
    <ligand>
        <name>AMP</name>
        <dbReference type="ChEBI" id="CHEBI:456215"/>
    </ligand>
</feature>
<feature type="binding site" evidence="1">
    <location>
        <position position="173"/>
    </location>
    <ligand>
        <name>AMP</name>
        <dbReference type="ChEBI" id="CHEBI:456215"/>
    </ligand>
</feature>
<feature type="binding site" evidence="1">
    <location>
        <position position="201"/>
    </location>
    <ligand>
        <name>ATP</name>
        <dbReference type="ChEBI" id="CHEBI:30616"/>
    </ligand>
</feature>
<reference key="1">
    <citation type="journal article" date="2007" name="J. Bacteriol.">
        <title>The complete genome sequence of the lactic acid bacterial paradigm Lactococcus lactis subsp. cremoris MG1363.</title>
        <authorList>
            <person name="Wegmann U."/>
            <person name="O'Connell-Motherway M."/>
            <person name="Zomer A."/>
            <person name="Buist G."/>
            <person name="Shearman C."/>
            <person name="Canchaya C."/>
            <person name="Ventura M."/>
            <person name="Goesmann A."/>
            <person name="Gasson M.J."/>
            <person name="Kuipers O.P."/>
            <person name="van Sinderen D."/>
            <person name="Kok J."/>
        </authorList>
    </citation>
    <scope>NUCLEOTIDE SEQUENCE [LARGE SCALE GENOMIC DNA]</scope>
    <source>
        <strain>MG1363</strain>
    </source>
</reference>